<comment type="function">
    <text evidence="2">Component of the ubiquinol-cytochrome c reductase complex (complex III or cytochrome b-c1 complex) that is part of the mitochondrial respiratory chain. The b-c1 complex mediates electron transfer from ubiquinol to cytochrome c. Contributes to the generation of a proton gradient across the mitochondrial membrane that is then used for ATP synthesis.</text>
</comment>
<comment type="cofactor">
    <cofactor evidence="2">
        <name>heme b</name>
        <dbReference type="ChEBI" id="CHEBI:60344"/>
    </cofactor>
    <text evidence="2">Binds 2 heme b groups non-covalently.</text>
</comment>
<comment type="subunit">
    <text evidence="2">The cytochrome bc1 complex contains 11 subunits: 3 respiratory subunits (MT-CYB, CYC1 and UQCRFS1), 2 core proteins (UQCRC1 and UQCRC2) and 6 low-molecular weight proteins (UQCRH/QCR6, UQCRB/QCR7, UQCRQ/QCR8, UQCR10/QCR9, UQCR11/QCR10 and a cleavage product of UQCRFS1). This cytochrome bc1 complex then forms a dimer.</text>
</comment>
<comment type="subcellular location">
    <subcellularLocation>
        <location evidence="2">Mitochondrion inner membrane</location>
        <topology evidence="2">Multi-pass membrane protein</topology>
    </subcellularLocation>
</comment>
<comment type="miscellaneous">
    <text evidence="1">Heme 1 (or BL or b562) is low-potential and absorbs at about 562 nm, and heme 2 (or BH or b566) is high-potential and absorbs at about 566 nm.</text>
</comment>
<comment type="similarity">
    <text evidence="3 4">Belongs to the cytochrome b family.</text>
</comment>
<comment type="caution">
    <text evidence="2">The full-length protein contains only eight transmembrane helices, not nine as predicted by bioinformatics tools.</text>
</comment>
<name>CYB_THOUM</name>
<gene>
    <name type="primary">MT-CYB</name>
    <name type="synonym">COB</name>
    <name type="synonym">CYTB</name>
    <name type="synonym">MTCYB</name>
</gene>
<feature type="chain" id="PRO_0000061665" description="Cytochrome b">
    <location>
        <begin position="1"/>
        <end position="379"/>
    </location>
</feature>
<feature type="transmembrane region" description="Helical" evidence="2">
    <location>
        <begin position="33"/>
        <end position="53"/>
    </location>
</feature>
<feature type="transmembrane region" description="Helical" evidence="2">
    <location>
        <begin position="77"/>
        <end position="98"/>
    </location>
</feature>
<feature type="transmembrane region" description="Helical" evidence="2">
    <location>
        <begin position="113"/>
        <end position="133"/>
    </location>
</feature>
<feature type="transmembrane region" description="Helical" evidence="2">
    <location>
        <begin position="178"/>
        <end position="198"/>
    </location>
</feature>
<feature type="transmembrane region" description="Helical" evidence="2">
    <location>
        <begin position="226"/>
        <end position="246"/>
    </location>
</feature>
<feature type="transmembrane region" description="Helical" evidence="2">
    <location>
        <begin position="288"/>
        <end position="308"/>
    </location>
</feature>
<feature type="transmembrane region" description="Helical" evidence="2">
    <location>
        <begin position="320"/>
        <end position="340"/>
    </location>
</feature>
<feature type="transmembrane region" description="Helical" evidence="2">
    <location>
        <begin position="347"/>
        <end position="367"/>
    </location>
</feature>
<feature type="binding site" description="axial binding residue" evidence="2">
    <location>
        <position position="83"/>
    </location>
    <ligand>
        <name>heme b</name>
        <dbReference type="ChEBI" id="CHEBI:60344"/>
        <label>b562</label>
    </ligand>
    <ligandPart>
        <name>Fe</name>
        <dbReference type="ChEBI" id="CHEBI:18248"/>
    </ligandPart>
</feature>
<feature type="binding site" description="axial binding residue" evidence="2">
    <location>
        <position position="97"/>
    </location>
    <ligand>
        <name>heme b</name>
        <dbReference type="ChEBI" id="CHEBI:60344"/>
        <label>b566</label>
    </ligand>
    <ligandPart>
        <name>Fe</name>
        <dbReference type="ChEBI" id="CHEBI:18248"/>
    </ligandPart>
</feature>
<feature type="binding site" description="axial binding residue" evidence="2">
    <location>
        <position position="182"/>
    </location>
    <ligand>
        <name>heme b</name>
        <dbReference type="ChEBI" id="CHEBI:60344"/>
        <label>b562</label>
    </ligand>
    <ligandPart>
        <name>Fe</name>
        <dbReference type="ChEBI" id="CHEBI:18248"/>
    </ligandPart>
</feature>
<feature type="binding site" description="axial binding residue" evidence="2">
    <location>
        <position position="196"/>
    </location>
    <ligand>
        <name>heme b</name>
        <dbReference type="ChEBI" id="CHEBI:60344"/>
        <label>b566</label>
    </ligand>
    <ligandPart>
        <name>Fe</name>
        <dbReference type="ChEBI" id="CHEBI:18248"/>
    </ligandPart>
</feature>
<feature type="binding site" evidence="2">
    <location>
        <position position="201"/>
    </location>
    <ligand>
        <name>a ubiquinone</name>
        <dbReference type="ChEBI" id="CHEBI:16389"/>
    </ligand>
</feature>
<proteinExistence type="inferred from homology"/>
<geneLocation type="mitochondrion"/>
<organism>
    <name type="scientific">Thomomys umbrinus</name>
    <name type="common">Southern pocket gopher</name>
    <dbReference type="NCBI Taxonomy" id="50725"/>
    <lineage>
        <taxon>Eukaryota</taxon>
        <taxon>Metazoa</taxon>
        <taxon>Chordata</taxon>
        <taxon>Craniata</taxon>
        <taxon>Vertebrata</taxon>
        <taxon>Euteleostomi</taxon>
        <taxon>Mammalia</taxon>
        <taxon>Eutheria</taxon>
        <taxon>Euarchontoglires</taxon>
        <taxon>Glires</taxon>
        <taxon>Rodentia</taxon>
        <taxon>Castorimorpha</taxon>
        <taxon>Geomyidae</taxon>
        <taxon>Thomomys</taxon>
    </lineage>
</organism>
<evidence type="ECO:0000250" key="1"/>
<evidence type="ECO:0000250" key="2">
    <source>
        <dbReference type="UniProtKB" id="P00157"/>
    </source>
</evidence>
<evidence type="ECO:0000255" key="3">
    <source>
        <dbReference type="PROSITE-ProRule" id="PRU00967"/>
    </source>
</evidence>
<evidence type="ECO:0000255" key="4">
    <source>
        <dbReference type="PROSITE-ProRule" id="PRU00968"/>
    </source>
</evidence>
<protein>
    <recommendedName>
        <fullName>Cytochrome b</fullName>
    </recommendedName>
    <alternativeName>
        <fullName>Complex III subunit 3</fullName>
    </alternativeName>
    <alternativeName>
        <fullName>Complex III subunit III</fullName>
    </alternativeName>
    <alternativeName>
        <fullName>Cytochrome b-c1 complex subunit 3</fullName>
    </alternativeName>
    <alternativeName>
        <fullName>Ubiquinol-cytochrome-c reductase complex cytochrome b subunit</fullName>
    </alternativeName>
</protein>
<keyword id="KW-0249">Electron transport</keyword>
<keyword id="KW-0349">Heme</keyword>
<keyword id="KW-0408">Iron</keyword>
<keyword id="KW-0472">Membrane</keyword>
<keyword id="KW-0479">Metal-binding</keyword>
<keyword id="KW-0496">Mitochondrion</keyword>
<keyword id="KW-0999">Mitochondrion inner membrane</keyword>
<keyword id="KW-0679">Respiratory chain</keyword>
<keyword id="KW-0812">Transmembrane</keyword>
<keyword id="KW-1133">Transmembrane helix</keyword>
<keyword id="KW-0813">Transport</keyword>
<keyword id="KW-0830">Ubiquinone</keyword>
<accession>O47993</accession>
<sequence>MTIIRKSHPLSKIVNHAFIDLPTPPNISGWWNFGSLLGMCLVLQIFTGLFLAMHYTSDTLTAFSSVTHICRDVNHGWLIRYMHANGASLFFICLYIHIGRGIYYGSYLYKETWNIGILLLFLTMATAFVGYVLPXGXMSFWGATVITNLLSAIPYIGQDLVEWIWGGFSVDKATLTRFFAFHFILPFIIAALATVHLLFLHETGSNNPLGIPSDXAKIPFHPYYTTKDFLGALIXIMFFMTLVLYFPXXLGDPDNYTPANPLNTPPHIKPEWYFLFAYAILRSIPNKLGGVVALILSILVLALLPYIHTSNQRSMMFRPISQFLFWTLVSDLLLLTWIGGQPVEPPFIIIGQTASXMYFTIILIXMXLAGLIXNKXLKW</sequence>
<dbReference type="EMBL" id="U65283">
    <property type="protein sequence ID" value="AAC40021.1"/>
    <property type="molecule type" value="Genomic_DNA"/>
</dbReference>
<dbReference type="GO" id="GO:0005743">
    <property type="term" value="C:mitochondrial inner membrane"/>
    <property type="evidence" value="ECO:0007669"/>
    <property type="project" value="UniProtKB-SubCell"/>
</dbReference>
<dbReference type="GO" id="GO:0045275">
    <property type="term" value="C:respiratory chain complex III"/>
    <property type="evidence" value="ECO:0007669"/>
    <property type="project" value="InterPro"/>
</dbReference>
<dbReference type="GO" id="GO:0046872">
    <property type="term" value="F:metal ion binding"/>
    <property type="evidence" value="ECO:0007669"/>
    <property type="project" value="UniProtKB-KW"/>
</dbReference>
<dbReference type="GO" id="GO:0008121">
    <property type="term" value="F:ubiquinol-cytochrome-c reductase activity"/>
    <property type="evidence" value="ECO:0007669"/>
    <property type="project" value="InterPro"/>
</dbReference>
<dbReference type="GO" id="GO:0006122">
    <property type="term" value="P:mitochondrial electron transport, ubiquinol to cytochrome c"/>
    <property type="evidence" value="ECO:0007669"/>
    <property type="project" value="TreeGrafter"/>
</dbReference>
<dbReference type="CDD" id="cd00290">
    <property type="entry name" value="cytochrome_b_C"/>
    <property type="match status" value="1"/>
</dbReference>
<dbReference type="CDD" id="cd00284">
    <property type="entry name" value="Cytochrome_b_N"/>
    <property type="match status" value="1"/>
</dbReference>
<dbReference type="FunFam" id="1.20.810.10:FF:000002">
    <property type="entry name" value="Cytochrome b"/>
    <property type="match status" value="1"/>
</dbReference>
<dbReference type="Gene3D" id="1.20.810.10">
    <property type="entry name" value="Cytochrome Bc1 Complex, Chain C"/>
    <property type="match status" value="1"/>
</dbReference>
<dbReference type="InterPro" id="IPR005798">
    <property type="entry name" value="Cyt_b/b6_C"/>
</dbReference>
<dbReference type="InterPro" id="IPR036150">
    <property type="entry name" value="Cyt_b/b6_C_sf"/>
</dbReference>
<dbReference type="InterPro" id="IPR005797">
    <property type="entry name" value="Cyt_b/b6_N"/>
</dbReference>
<dbReference type="InterPro" id="IPR027387">
    <property type="entry name" value="Cytb/b6-like_sf"/>
</dbReference>
<dbReference type="InterPro" id="IPR030689">
    <property type="entry name" value="Cytochrome_b"/>
</dbReference>
<dbReference type="InterPro" id="IPR048260">
    <property type="entry name" value="Cytochrome_b_C_euk/bac"/>
</dbReference>
<dbReference type="InterPro" id="IPR048259">
    <property type="entry name" value="Cytochrome_b_N_euk/bac"/>
</dbReference>
<dbReference type="InterPro" id="IPR016174">
    <property type="entry name" value="Di-haem_cyt_TM"/>
</dbReference>
<dbReference type="PANTHER" id="PTHR19271">
    <property type="entry name" value="CYTOCHROME B"/>
    <property type="match status" value="1"/>
</dbReference>
<dbReference type="PANTHER" id="PTHR19271:SF16">
    <property type="entry name" value="CYTOCHROME B"/>
    <property type="match status" value="1"/>
</dbReference>
<dbReference type="Pfam" id="PF00032">
    <property type="entry name" value="Cytochrom_B_C"/>
    <property type="match status" value="1"/>
</dbReference>
<dbReference type="Pfam" id="PF00033">
    <property type="entry name" value="Cytochrome_B"/>
    <property type="match status" value="1"/>
</dbReference>
<dbReference type="PIRSF" id="PIRSF038885">
    <property type="entry name" value="COB"/>
    <property type="match status" value="1"/>
</dbReference>
<dbReference type="SUPFAM" id="SSF81648">
    <property type="entry name" value="a domain/subunit of cytochrome bc1 complex (Ubiquinol-cytochrome c reductase)"/>
    <property type="match status" value="1"/>
</dbReference>
<dbReference type="SUPFAM" id="SSF81342">
    <property type="entry name" value="Transmembrane di-heme cytochromes"/>
    <property type="match status" value="1"/>
</dbReference>
<dbReference type="PROSITE" id="PS51003">
    <property type="entry name" value="CYTB_CTER"/>
    <property type="match status" value="1"/>
</dbReference>
<dbReference type="PROSITE" id="PS51002">
    <property type="entry name" value="CYTB_NTER"/>
    <property type="match status" value="1"/>
</dbReference>
<reference key="1">
    <citation type="journal article" date="1998" name="Mol. Phylogenet. Evol.">
        <title>Phylogenetic relationships and geographic structure in pocket gophers in the genus Thomomys.</title>
        <authorList>
            <person name="Smith M.F."/>
        </authorList>
    </citation>
    <scope>NUCLEOTIDE SEQUENCE [GENOMIC DNA]</scope>
    <source>
        <strain>Isolate MVZ 148306</strain>
    </source>
</reference>